<organism>
    <name type="scientific">Geobacter sp. (strain M21)</name>
    <dbReference type="NCBI Taxonomy" id="443144"/>
    <lineage>
        <taxon>Bacteria</taxon>
        <taxon>Pseudomonadati</taxon>
        <taxon>Thermodesulfobacteriota</taxon>
        <taxon>Desulfuromonadia</taxon>
        <taxon>Geobacterales</taxon>
        <taxon>Geobacteraceae</taxon>
        <taxon>Geobacter</taxon>
    </lineage>
</organism>
<feature type="chain" id="PRO_1000202997" description="33 kDa chaperonin">
    <location>
        <begin position="1"/>
        <end position="295"/>
    </location>
</feature>
<feature type="disulfide bond" description="Redox-active" evidence="1">
    <location>
        <begin position="236"/>
        <end position="238"/>
    </location>
</feature>
<feature type="disulfide bond" description="Redox-active" evidence="1">
    <location>
        <begin position="269"/>
        <end position="272"/>
    </location>
</feature>
<evidence type="ECO:0000255" key="1">
    <source>
        <dbReference type="HAMAP-Rule" id="MF_00117"/>
    </source>
</evidence>
<accession>C6E689</accession>
<name>HSLO_GEOSM</name>
<comment type="function">
    <text evidence="1">Redox regulated molecular chaperone. Protects both thermally unfolding and oxidatively damaged proteins from irreversible aggregation. Plays an important role in the bacterial defense system toward oxidative stress.</text>
</comment>
<comment type="subcellular location">
    <subcellularLocation>
        <location evidence="1">Cytoplasm</location>
    </subcellularLocation>
</comment>
<comment type="PTM">
    <text evidence="1">Under oxidizing conditions two disulfide bonds are formed involving the reactive cysteines. Under reducing conditions zinc is bound to the reactive cysteines and the protein is inactive.</text>
</comment>
<comment type="similarity">
    <text evidence="1">Belongs to the HSP33 family.</text>
</comment>
<sequence length="295" mass="31747">MTDYLVRAIAKSGSVRALVCVTTATVGEICKRHDTLPTATAALGRGITAGALMGSLVKTGQRVALRFEGNGPLKKIVIEADANGSVRGYVGDPKVHLLRPDGALDVNNALGRAGFLTVAKDLGLKEPYRGTVQLYTSGIAEDLALYLVESEQIPSAVGIAEFIEQDGTVAAVGGFLIQAVPPVDPLVVEELMTRIEQLPPLSELLHEGGNPEQILEQLLAGIPYDILEKRNIAFACSCSRERIERVLLSMGKKELSSMKKDQHGSEVTCEFCGERYLFDEADLDRIIAEIAKQES</sequence>
<proteinExistence type="inferred from homology"/>
<dbReference type="EMBL" id="CP001661">
    <property type="protein sequence ID" value="ACT19641.1"/>
    <property type="molecule type" value="Genomic_DNA"/>
</dbReference>
<dbReference type="SMR" id="C6E689"/>
<dbReference type="STRING" id="443144.GM21_3620"/>
<dbReference type="KEGG" id="gem:GM21_3620"/>
<dbReference type="eggNOG" id="COG1281">
    <property type="taxonomic scope" value="Bacteria"/>
</dbReference>
<dbReference type="HOGENOM" id="CLU_054493_1_0_7"/>
<dbReference type="OrthoDB" id="9793753at2"/>
<dbReference type="GO" id="GO:0005737">
    <property type="term" value="C:cytoplasm"/>
    <property type="evidence" value="ECO:0007669"/>
    <property type="project" value="UniProtKB-SubCell"/>
</dbReference>
<dbReference type="GO" id="GO:0044183">
    <property type="term" value="F:protein folding chaperone"/>
    <property type="evidence" value="ECO:0007669"/>
    <property type="project" value="TreeGrafter"/>
</dbReference>
<dbReference type="GO" id="GO:0051082">
    <property type="term" value="F:unfolded protein binding"/>
    <property type="evidence" value="ECO:0007669"/>
    <property type="project" value="UniProtKB-UniRule"/>
</dbReference>
<dbReference type="GO" id="GO:0042026">
    <property type="term" value="P:protein refolding"/>
    <property type="evidence" value="ECO:0007669"/>
    <property type="project" value="TreeGrafter"/>
</dbReference>
<dbReference type="CDD" id="cd00498">
    <property type="entry name" value="Hsp33"/>
    <property type="match status" value="1"/>
</dbReference>
<dbReference type="Gene3D" id="3.55.30.10">
    <property type="entry name" value="Hsp33 domain"/>
    <property type="match status" value="1"/>
</dbReference>
<dbReference type="Gene3D" id="3.90.1280.10">
    <property type="entry name" value="HSP33 redox switch-like"/>
    <property type="match status" value="1"/>
</dbReference>
<dbReference type="HAMAP" id="MF_00117">
    <property type="entry name" value="HslO"/>
    <property type="match status" value="1"/>
</dbReference>
<dbReference type="InterPro" id="IPR000397">
    <property type="entry name" value="Heat_shock_Hsp33"/>
</dbReference>
<dbReference type="InterPro" id="IPR016154">
    <property type="entry name" value="Heat_shock_Hsp33_C"/>
</dbReference>
<dbReference type="InterPro" id="IPR016153">
    <property type="entry name" value="Heat_shock_Hsp33_N"/>
</dbReference>
<dbReference type="NCBIfam" id="NF001033">
    <property type="entry name" value="PRK00114.1"/>
    <property type="match status" value="1"/>
</dbReference>
<dbReference type="PANTHER" id="PTHR30111">
    <property type="entry name" value="33 KDA CHAPERONIN"/>
    <property type="match status" value="1"/>
</dbReference>
<dbReference type="PANTHER" id="PTHR30111:SF1">
    <property type="entry name" value="33 KDA CHAPERONIN"/>
    <property type="match status" value="1"/>
</dbReference>
<dbReference type="Pfam" id="PF01430">
    <property type="entry name" value="HSP33"/>
    <property type="match status" value="1"/>
</dbReference>
<dbReference type="PIRSF" id="PIRSF005261">
    <property type="entry name" value="Heat_shock_Hsp33"/>
    <property type="match status" value="1"/>
</dbReference>
<dbReference type="SUPFAM" id="SSF64397">
    <property type="entry name" value="Hsp33 domain"/>
    <property type="match status" value="1"/>
</dbReference>
<dbReference type="SUPFAM" id="SSF118352">
    <property type="entry name" value="HSP33 redox switch-like"/>
    <property type="match status" value="1"/>
</dbReference>
<reference key="1">
    <citation type="submission" date="2009-07" db="EMBL/GenBank/DDBJ databases">
        <title>Complete sequence of Geobacter sp. M21.</title>
        <authorList>
            <consortium name="US DOE Joint Genome Institute"/>
            <person name="Lucas S."/>
            <person name="Copeland A."/>
            <person name="Lapidus A."/>
            <person name="Glavina del Rio T."/>
            <person name="Dalin E."/>
            <person name="Tice H."/>
            <person name="Bruce D."/>
            <person name="Goodwin L."/>
            <person name="Pitluck S."/>
            <person name="Saunders E."/>
            <person name="Brettin T."/>
            <person name="Detter J.C."/>
            <person name="Han C."/>
            <person name="Larimer F."/>
            <person name="Land M."/>
            <person name="Hauser L."/>
            <person name="Kyrpides N."/>
            <person name="Ovchinnikova G."/>
            <person name="Lovley D."/>
        </authorList>
    </citation>
    <scope>NUCLEOTIDE SEQUENCE [LARGE SCALE GENOMIC DNA]</scope>
    <source>
        <strain>M21</strain>
    </source>
</reference>
<protein>
    <recommendedName>
        <fullName evidence="1">33 kDa chaperonin</fullName>
    </recommendedName>
    <alternativeName>
        <fullName evidence="1">Heat shock protein 33 homolog</fullName>
        <shortName evidence="1">HSP33</shortName>
    </alternativeName>
</protein>
<keyword id="KW-0143">Chaperone</keyword>
<keyword id="KW-0963">Cytoplasm</keyword>
<keyword id="KW-1015">Disulfide bond</keyword>
<keyword id="KW-0676">Redox-active center</keyword>
<keyword id="KW-0862">Zinc</keyword>
<gene>
    <name evidence="1" type="primary">hslO</name>
    <name type="ordered locus">GM21_3620</name>
</gene>